<gene>
    <name type="primary">MT-CYB</name>
    <name type="synonym">COB</name>
    <name type="synonym">CYTB</name>
    <name type="synonym">MTCYB</name>
</gene>
<name>CYB_GALPV</name>
<dbReference type="EMBL" id="AF522330">
    <property type="protein sequence ID" value="AAQ08834.1"/>
    <property type="molecule type" value="Genomic_DNA"/>
</dbReference>
<dbReference type="SMR" id="Q71EA6"/>
<dbReference type="GO" id="GO:0005743">
    <property type="term" value="C:mitochondrial inner membrane"/>
    <property type="evidence" value="ECO:0007669"/>
    <property type="project" value="UniProtKB-SubCell"/>
</dbReference>
<dbReference type="GO" id="GO:0045275">
    <property type="term" value="C:respiratory chain complex III"/>
    <property type="evidence" value="ECO:0007669"/>
    <property type="project" value="InterPro"/>
</dbReference>
<dbReference type="GO" id="GO:0046872">
    <property type="term" value="F:metal ion binding"/>
    <property type="evidence" value="ECO:0007669"/>
    <property type="project" value="UniProtKB-KW"/>
</dbReference>
<dbReference type="GO" id="GO:0008121">
    <property type="term" value="F:ubiquinol-cytochrome-c reductase activity"/>
    <property type="evidence" value="ECO:0007669"/>
    <property type="project" value="InterPro"/>
</dbReference>
<dbReference type="GO" id="GO:0006122">
    <property type="term" value="P:mitochondrial electron transport, ubiquinol to cytochrome c"/>
    <property type="evidence" value="ECO:0007669"/>
    <property type="project" value="TreeGrafter"/>
</dbReference>
<dbReference type="CDD" id="cd00290">
    <property type="entry name" value="cytochrome_b_C"/>
    <property type="match status" value="1"/>
</dbReference>
<dbReference type="CDD" id="cd00284">
    <property type="entry name" value="Cytochrome_b_N"/>
    <property type="match status" value="1"/>
</dbReference>
<dbReference type="FunFam" id="1.20.810.10:FF:000002">
    <property type="entry name" value="Cytochrome b"/>
    <property type="match status" value="1"/>
</dbReference>
<dbReference type="Gene3D" id="1.20.810.10">
    <property type="entry name" value="Cytochrome Bc1 Complex, Chain C"/>
    <property type="match status" value="1"/>
</dbReference>
<dbReference type="InterPro" id="IPR005798">
    <property type="entry name" value="Cyt_b/b6_C"/>
</dbReference>
<dbReference type="InterPro" id="IPR036150">
    <property type="entry name" value="Cyt_b/b6_C_sf"/>
</dbReference>
<dbReference type="InterPro" id="IPR005797">
    <property type="entry name" value="Cyt_b/b6_N"/>
</dbReference>
<dbReference type="InterPro" id="IPR027387">
    <property type="entry name" value="Cytb/b6-like_sf"/>
</dbReference>
<dbReference type="InterPro" id="IPR030689">
    <property type="entry name" value="Cytochrome_b"/>
</dbReference>
<dbReference type="InterPro" id="IPR048260">
    <property type="entry name" value="Cytochrome_b_C_euk/bac"/>
</dbReference>
<dbReference type="InterPro" id="IPR048259">
    <property type="entry name" value="Cytochrome_b_N_euk/bac"/>
</dbReference>
<dbReference type="InterPro" id="IPR016174">
    <property type="entry name" value="Di-haem_cyt_TM"/>
</dbReference>
<dbReference type="PANTHER" id="PTHR19271">
    <property type="entry name" value="CYTOCHROME B"/>
    <property type="match status" value="1"/>
</dbReference>
<dbReference type="PANTHER" id="PTHR19271:SF16">
    <property type="entry name" value="CYTOCHROME B"/>
    <property type="match status" value="1"/>
</dbReference>
<dbReference type="Pfam" id="PF00032">
    <property type="entry name" value="Cytochrom_B_C"/>
    <property type="match status" value="1"/>
</dbReference>
<dbReference type="Pfam" id="PF00033">
    <property type="entry name" value="Cytochrome_B"/>
    <property type="match status" value="1"/>
</dbReference>
<dbReference type="PIRSF" id="PIRSF038885">
    <property type="entry name" value="COB"/>
    <property type="match status" value="1"/>
</dbReference>
<dbReference type="SUPFAM" id="SSF81648">
    <property type="entry name" value="a domain/subunit of cytochrome bc1 complex (Ubiquinol-cytochrome c reductase)"/>
    <property type="match status" value="1"/>
</dbReference>
<dbReference type="SUPFAM" id="SSF81342">
    <property type="entry name" value="Transmembrane di-heme cytochromes"/>
    <property type="match status" value="1"/>
</dbReference>
<dbReference type="PROSITE" id="PS51003">
    <property type="entry name" value="CYTB_CTER"/>
    <property type="match status" value="1"/>
</dbReference>
<dbReference type="PROSITE" id="PS51002">
    <property type="entry name" value="CYTB_NTER"/>
    <property type="match status" value="1"/>
</dbReference>
<comment type="function">
    <text evidence="2">Component of the ubiquinol-cytochrome c reductase complex (complex III or cytochrome b-c1 complex) that is part of the mitochondrial respiratory chain. The b-c1 complex mediates electron transfer from ubiquinol to cytochrome c. Contributes to the generation of a proton gradient across the mitochondrial membrane that is then used for ATP synthesis.</text>
</comment>
<comment type="cofactor">
    <cofactor evidence="2">
        <name>heme b</name>
        <dbReference type="ChEBI" id="CHEBI:60344"/>
    </cofactor>
    <text evidence="2">Binds 2 heme b groups non-covalently.</text>
</comment>
<comment type="subunit">
    <text evidence="2">The cytochrome bc1 complex contains 11 subunits: 3 respiratory subunits (MT-CYB, CYC1 and UQCRFS1), 2 core proteins (UQCRC1 and UQCRC2) and 6 low-molecular weight proteins (UQCRH/QCR6, UQCRB/QCR7, UQCRQ/QCR8, UQCR10/QCR9, UQCR11/QCR10 and a cleavage product of UQCRFS1). This cytochrome bc1 complex then forms a dimer.</text>
</comment>
<comment type="subcellular location">
    <subcellularLocation>
        <location evidence="2">Mitochondrion inner membrane</location>
        <topology evidence="2">Multi-pass membrane protein</topology>
    </subcellularLocation>
</comment>
<comment type="miscellaneous">
    <text evidence="1">Heme 1 (or BL or b562) is low-potential and absorbs at about 562 nm, and heme 2 (or BH or b566) is high-potential and absorbs at about 566 nm.</text>
</comment>
<comment type="similarity">
    <text evidence="3 4">Belongs to the cytochrome b family.</text>
</comment>
<comment type="caution">
    <text evidence="2">The full-length protein contains only eight transmembrane helices, not nine as predicted by bioinformatics tools.</text>
</comment>
<reference key="1">
    <citation type="journal article" date="2004" name="Mol. Phylogenet. Evol.">
        <title>Molecular systematics and origin of sociality in mongooses (Herpestidae, Carnivora).</title>
        <authorList>
            <person name="Veron G."/>
            <person name="Colyn M."/>
            <person name="Dunham A.E."/>
            <person name="Taylor P."/>
            <person name="Gaubert P."/>
        </authorList>
    </citation>
    <scope>NUCLEOTIDE SEQUENCE [GENOMIC DNA]</scope>
</reference>
<sequence length="379" mass="42710">MTNIRKSHPLIKIVNESFIDLPAPSNISAWWNFGSLLGVCLILQILTGLFLAMHYTSDTATAFSSVTHICRDVNHGWMIRYMHANGASMFFICLFMHVGRGMYYGSYTFMETWNIGILLLFTVMATAFMGYVLPWGQMSFWGATVITNLLSAIPYIGTNLVEWIWGGFSVDKATLTRFFAFHFILPFIICALAAVHLLFLHETGSNNPSGISSDSDKIPFHPYYTIKDILGLLIMLMMLMTLVLFSPDLLGDPDNYTPANPLNTPPHIKPEWYFLFAYAILRSIPNKLGGVLALVLSIMILAIVPLLHTSNQRGMMFRPLSQCLFWLLVADLLILTWIGGQPVEYPFIAIGQLASILYFLIILIFMPISGTIENQLLKW</sequence>
<feature type="chain" id="PRO_0000254692" description="Cytochrome b">
    <location>
        <begin position="1"/>
        <end position="379"/>
    </location>
</feature>
<feature type="transmembrane region" description="Helical" evidence="2">
    <location>
        <begin position="33"/>
        <end position="53"/>
    </location>
</feature>
<feature type="transmembrane region" description="Helical" evidence="2">
    <location>
        <begin position="77"/>
        <end position="98"/>
    </location>
</feature>
<feature type="transmembrane region" description="Helical" evidence="2">
    <location>
        <begin position="113"/>
        <end position="133"/>
    </location>
</feature>
<feature type="transmembrane region" description="Helical" evidence="2">
    <location>
        <begin position="178"/>
        <end position="198"/>
    </location>
</feature>
<feature type="transmembrane region" description="Helical" evidence="2">
    <location>
        <begin position="226"/>
        <end position="246"/>
    </location>
</feature>
<feature type="transmembrane region" description="Helical" evidence="2">
    <location>
        <begin position="288"/>
        <end position="308"/>
    </location>
</feature>
<feature type="transmembrane region" description="Helical" evidence="2">
    <location>
        <begin position="320"/>
        <end position="340"/>
    </location>
</feature>
<feature type="transmembrane region" description="Helical" evidence="2">
    <location>
        <begin position="347"/>
        <end position="367"/>
    </location>
</feature>
<feature type="binding site" description="axial binding residue" evidence="2">
    <location>
        <position position="83"/>
    </location>
    <ligand>
        <name>heme b</name>
        <dbReference type="ChEBI" id="CHEBI:60344"/>
        <label>b562</label>
    </ligand>
    <ligandPart>
        <name>Fe</name>
        <dbReference type="ChEBI" id="CHEBI:18248"/>
    </ligandPart>
</feature>
<feature type="binding site" description="axial binding residue" evidence="2">
    <location>
        <position position="97"/>
    </location>
    <ligand>
        <name>heme b</name>
        <dbReference type="ChEBI" id="CHEBI:60344"/>
        <label>b566</label>
    </ligand>
    <ligandPart>
        <name>Fe</name>
        <dbReference type="ChEBI" id="CHEBI:18248"/>
    </ligandPart>
</feature>
<feature type="binding site" description="axial binding residue" evidence="2">
    <location>
        <position position="182"/>
    </location>
    <ligand>
        <name>heme b</name>
        <dbReference type="ChEBI" id="CHEBI:60344"/>
        <label>b562</label>
    </ligand>
    <ligandPart>
        <name>Fe</name>
        <dbReference type="ChEBI" id="CHEBI:18248"/>
    </ligandPart>
</feature>
<feature type="binding site" description="axial binding residue" evidence="2">
    <location>
        <position position="196"/>
    </location>
    <ligand>
        <name>heme b</name>
        <dbReference type="ChEBI" id="CHEBI:60344"/>
        <label>b566</label>
    </ligand>
    <ligandPart>
        <name>Fe</name>
        <dbReference type="ChEBI" id="CHEBI:18248"/>
    </ligandPart>
</feature>
<feature type="binding site" evidence="2">
    <location>
        <position position="201"/>
    </location>
    <ligand>
        <name>a ubiquinone</name>
        <dbReference type="ChEBI" id="CHEBI:16389"/>
    </ligand>
</feature>
<proteinExistence type="inferred from homology"/>
<geneLocation type="mitochondrion"/>
<organism>
    <name type="scientific">Galerella pulverulenta</name>
    <name type="common">Cape grey mongoose</name>
    <name type="synonym">Herpestes pulverulentus</name>
    <dbReference type="NCBI Taxonomy" id="55052"/>
    <lineage>
        <taxon>Eukaryota</taxon>
        <taxon>Metazoa</taxon>
        <taxon>Chordata</taxon>
        <taxon>Craniata</taxon>
        <taxon>Vertebrata</taxon>
        <taxon>Euteleostomi</taxon>
        <taxon>Mammalia</taxon>
        <taxon>Eutheria</taxon>
        <taxon>Laurasiatheria</taxon>
        <taxon>Carnivora</taxon>
        <taxon>Feliformia</taxon>
        <taxon>Herpestidae</taxon>
        <taxon>Galerella</taxon>
    </lineage>
</organism>
<protein>
    <recommendedName>
        <fullName>Cytochrome b</fullName>
    </recommendedName>
    <alternativeName>
        <fullName>Complex III subunit 3</fullName>
    </alternativeName>
    <alternativeName>
        <fullName>Complex III subunit III</fullName>
    </alternativeName>
    <alternativeName>
        <fullName>Cytochrome b-c1 complex subunit 3</fullName>
    </alternativeName>
    <alternativeName>
        <fullName>Ubiquinol-cytochrome-c reductase complex cytochrome b subunit</fullName>
    </alternativeName>
</protein>
<evidence type="ECO:0000250" key="1"/>
<evidence type="ECO:0000250" key="2">
    <source>
        <dbReference type="UniProtKB" id="P00157"/>
    </source>
</evidence>
<evidence type="ECO:0000255" key="3">
    <source>
        <dbReference type="PROSITE-ProRule" id="PRU00967"/>
    </source>
</evidence>
<evidence type="ECO:0000255" key="4">
    <source>
        <dbReference type="PROSITE-ProRule" id="PRU00968"/>
    </source>
</evidence>
<accession>Q71EA6</accession>
<keyword id="KW-0249">Electron transport</keyword>
<keyword id="KW-0349">Heme</keyword>
<keyword id="KW-0408">Iron</keyword>
<keyword id="KW-0472">Membrane</keyword>
<keyword id="KW-0479">Metal-binding</keyword>
<keyword id="KW-0496">Mitochondrion</keyword>
<keyword id="KW-0999">Mitochondrion inner membrane</keyword>
<keyword id="KW-0679">Respiratory chain</keyword>
<keyword id="KW-0812">Transmembrane</keyword>
<keyword id="KW-1133">Transmembrane helix</keyword>
<keyword id="KW-0813">Transport</keyword>
<keyword id="KW-0830">Ubiquinone</keyword>